<proteinExistence type="inferred from homology"/>
<evidence type="ECO:0000255" key="1">
    <source>
        <dbReference type="HAMAP-Rule" id="MF_01342"/>
    </source>
</evidence>
<evidence type="ECO:0000256" key="2">
    <source>
        <dbReference type="SAM" id="MobiDB-lite"/>
    </source>
</evidence>
<evidence type="ECO:0000305" key="3"/>
<comment type="function">
    <text evidence="1">Binds 23S rRNA and is also seen to make contacts with the A and possibly P site tRNAs.</text>
</comment>
<comment type="subunit">
    <text evidence="1">Part of the 50S ribosomal subunit.</text>
</comment>
<comment type="similarity">
    <text evidence="1">Belongs to the universal ribosomal protein uL16 family.</text>
</comment>
<accession>B5ELY6</accession>
<sequence length="138" mass="15453">MLQPKRTKFRKQHKGRNRGVATRGSKVSFGEFGLKAVGRGRITARQLEAARRAISRHVKRGGRIWIRIFPDKPISKKPAEVRMGKGKGNPEYWVALIQPGKVLYEMEGVTEEVAREAFALGAAKLPVQTAFVSRRVMG</sequence>
<protein>
    <recommendedName>
        <fullName evidence="1">Large ribosomal subunit protein uL16</fullName>
    </recommendedName>
    <alternativeName>
        <fullName evidence="3">50S ribosomal protein L16</fullName>
    </alternativeName>
</protein>
<keyword id="KW-0687">Ribonucleoprotein</keyword>
<keyword id="KW-0689">Ribosomal protein</keyword>
<keyword id="KW-0694">RNA-binding</keyword>
<keyword id="KW-0699">rRNA-binding</keyword>
<keyword id="KW-0820">tRNA-binding</keyword>
<reference key="1">
    <citation type="submission" date="2008-08" db="EMBL/GenBank/DDBJ databases">
        <title>Complete sequence of Acidithiobacillus ferrooxidans ATCC 53993.</title>
        <authorList>
            <person name="Lucas S."/>
            <person name="Copeland A."/>
            <person name="Lapidus A."/>
            <person name="Glavina del Rio T."/>
            <person name="Dalin E."/>
            <person name="Tice H."/>
            <person name="Bruce D."/>
            <person name="Goodwin L."/>
            <person name="Pitluck S."/>
            <person name="Sims D."/>
            <person name="Brettin T."/>
            <person name="Detter J.C."/>
            <person name="Han C."/>
            <person name="Kuske C.R."/>
            <person name="Larimer F."/>
            <person name="Land M."/>
            <person name="Hauser L."/>
            <person name="Kyrpides N."/>
            <person name="Lykidis A."/>
            <person name="Borole A.P."/>
        </authorList>
    </citation>
    <scope>NUCLEOTIDE SEQUENCE [LARGE SCALE GENOMIC DNA]</scope>
    <source>
        <strain>ATCC 53993 / BNL-5-31</strain>
    </source>
</reference>
<dbReference type="EMBL" id="CP001132">
    <property type="protein sequence ID" value="ACH82758.1"/>
    <property type="molecule type" value="Genomic_DNA"/>
</dbReference>
<dbReference type="RefSeq" id="WP_012536088.1">
    <property type="nucleotide sequence ID" value="NC_011206.1"/>
</dbReference>
<dbReference type="SMR" id="B5ELY6"/>
<dbReference type="GeneID" id="65279713"/>
<dbReference type="KEGG" id="afe:Lferr_0504"/>
<dbReference type="eggNOG" id="COG0197">
    <property type="taxonomic scope" value="Bacteria"/>
</dbReference>
<dbReference type="HOGENOM" id="CLU_078858_2_1_6"/>
<dbReference type="GO" id="GO:0022625">
    <property type="term" value="C:cytosolic large ribosomal subunit"/>
    <property type="evidence" value="ECO:0007669"/>
    <property type="project" value="TreeGrafter"/>
</dbReference>
<dbReference type="GO" id="GO:0019843">
    <property type="term" value="F:rRNA binding"/>
    <property type="evidence" value="ECO:0007669"/>
    <property type="project" value="UniProtKB-UniRule"/>
</dbReference>
<dbReference type="GO" id="GO:0003735">
    <property type="term" value="F:structural constituent of ribosome"/>
    <property type="evidence" value="ECO:0007669"/>
    <property type="project" value="InterPro"/>
</dbReference>
<dbReference type="GO" id="GO:0000049">
    <property type="term" value="F:tRNA binding"/>
    <property type="evidence" value="ECO:0007669"/>
    <property type="project" value="UniProtKB-KW"/>
</dbReference>
<dbReference type="GO" id="GO:0006412">
    <property type="term" value="P:translation"/>
    <property type="evidence" value="ECO:0007669"/>
    <property type="project" value="UniProtKB-UniRule"/>
</dbReference>
<dbReference type="CDD" id="cd01433">
    <property type="entry name" value="Ribosomal_L16_L10e"/>
    <property type="match status" value="1"/>
</dbReference>
<dbReference type="FunFam" id="3.90.1170.10:FF:000001">
    <property type="entry name" value="50S ribosomal protein L16"/>
    <property type="match status" value="1"/>
</dbReference>
<dbReference type="Gene3D" id="3.90.1170.10">
    <property type="entry name" value="Ribosomal protein L10e/L16"/>
    <property type="match status" value="1"/>
</dbReference>
<dbReference type="HAMAP" id="MF_01342">
    <property type="entry name" value="Ribosomal_uL16"/>
    <property type="match status" value="1"/>
</dbReference>
<dbReference type="InterPro" id="IPR047873">
    <property type="entry name" value="Ribosomal_uL16"/>
</dbReference>
<dbReference type="InterPro" id="IPR000114">
    <property type="entry name" value="Ribosomal_uL16_bact-type"/>
</dbReference>
<dbReference type="InterPro" id="IPR020798">
    <property type="entry name" value="Ribosomal_uL16_CS"/>
</dbReference>
<dbReference type="InterPro" id="IPR016180">
    <property type="entry name" value="Ribosomal_uL16_dom"/>
</dbReference>
<dbReference type="InterPro" id="IPR036920">
    <property type="entry name" value="Ribosomal_uL16_sf"/>
</dbReference>
<dbReference type="NCBIfam" id="TIGR01164">
    <property type="entry name" value="rplP_bact"/>
    <property type="match status" value="1"/>
</dbReference>
<dbReference type="PANTHER" id="PTHR12220">
    <property type="entry name" value="50S/60S RIBOSOMAL PROTEIN L16"/>
    <property type="match status" value="1"/>
</dbReference>
<dbReference type="PANTHER" id="PTHR12220:SF13">
    <property type="entry name" value="LARGE RIBOSOMAL SUBUNIT PROTEIN UL16M"/>
    <property type="match status" value="1"/>
</dbReference>
<dbReference type="Pfam" id="PF00252">
    <property type="entry name" value="Ribosomal_L16"/>
    <property type="match status" value="1"/>
</dbReference>
<dbReference type="PRINTS" id="PR00060">
    <property type="entry name" value="RIBOSOMALL16"/>
</dbReference>
<dbReference type="SUPFAM" id="SSF54686">
    <property type="entry name" value="Ribosomal protein L16p/L10e"/>
    <property type="match status" value="1"/>
</dbReference>
<dbReference type="PROSITE" id="PS00586">
    <property type="entry name" value="RIBOSOMAL_L16_1"/>
    <property type="match status" value="1"/>
</dbReference>
<dbReference type="PROSITE" id="PS00701">
    <property type="entry name" value="RIBOSOMAL_L16_2"/>
    <property type="match status" value="1"/>
</dbReference>
<name>RL16_ACIF5</name>
<organism>
    <name type="scientific">Acidithiobacillus ferrooxidans (strain ATCC 53993 / BNL-5-31)</name>
    <name type="common">Leptospirillum ferrooxidans (ATCC 53993)</name>
    <dbReference type="NCBI Taxonomy" id="380394"/>
    <lineage>
        <taxon>Bacteria</taxon>
        <taxon>Pseudomonadati</taxon>
        <taxon>Pseudomonadota</taxon>
        <taxon>Acidithiobacillia</taxon>
        <taxon>Acidithiobacillales</taxon>
        <taxon>Acidithiobacillaceae</taxon>
        <taxon>Acidithiobacillus</taxon>
    </lineage>
</organism>
<gene>
    <name evidence="1" type="primary">rplP</name>
    <name type="ordered locus">Lferr_0504</name>
</gene>
<feature type="chain" id="PRO_1000142913" description="Large ribosomal subunit protein uL16">
    <location>
        <begin position="1"/>
        <end position="138"/>
    </location>
</feature>
<feature type="region of interest" description="Disordered" evidence="2">
    <location>
        <begin position="1"/>
        <end position="22"/>
    </location>
</feature>
<feature type="compositionally biased region" description="Basic residues" evidence="2">
    <location>
        <begin position="1"/>
        <end position="17"/>
    </location>
</feature>